<gene>
    <name type="primary">CA10</name>
</gene>
<accession>A0JN41</accession>
<protein>
    <recommendedName>
        <fullName>Carbonic anhydrase-related protein 10</fullName>
    </recommendedName>
</protein>
<comment type="function">
    <text>Does not have a catalytic activity.</text>
</comment>
<comment type="similarity">
    <text evidence="2">Belongs to the alpha-carbonic anhydrase family.</text>
</comment>
<proteinExistence type="evidence at transcript level"/>
<organism>
    <name type="scientific">Bos taurus</name>
    <name type="common">Bovine</name>
    <dbReference type="NCBI Taxonomy" id="9913"/>
    <lineage>
        <taxon>Eukaryota</taxon>
        <taxon>Metazoa</taxon>
        <taxon>Chordata</taxon>
        <taxon>Craniata</taxon>
        <taxon>Vertebrata</taxon>
        <taxon>Euteleostomi</taxon>
        <taxon>Mammalia</taxon>
        <taxon>Eutheria</taxon>
        <taxon>Laurasiatheria</taxon>
        <taxon>Artiodactyla</taxon>
        <taxon>Ruminantia</taxon>
        <taxon>Pecora</taxon>
        <taxon>Bovidae</taxon>
        <taxon>Bovinae</taxon>
        <taxon>Bos</taxon>
    </lineage>
</organism>
<keyword id="KW-1185">Reference proteome</keyword>
<feature type="chain" id="PRO_0000282868" description="Carbonic anhydrase-related protein 10">
    <location>
        <begin position="1"/>
        <end position="328"/>
    </location>
</feature>
<feature type="domain" description="Alpha-carbonic anhydrase" evidence="1">
    <location>
        <begin position="31"/>
        <end position="301"/>
    </location>
</feature>
<reference key="1">
    <citation type="submission" date="2006-10" db="EMBL/GenBank/DDBJ databases">
        <authorList>
            <consortium name="NIH - Mammalian Gene Collection (MGC) project"/>
        </authorList>
    </citation>
    <scope>NUCLEOTIDE SEQUENCE [LARGE SCALE MRNA]</scope>
    <source>
        <strain>Hereford</strain>
        <tissue>Thalamus</tissue>
    </source>
</reference>
<dbReference type="EMBL" id="BC126507">
    <property type="protein sequence ID" value="AAI26508.1"/>
    <property type="molecule type" value="mRNA"/>
</dbReference>
<dbReference type="RefSeq" id="NP_001073077.1">
    <property type="nucleotide sequence ID" value="NM_001079609.1"/>
</dbReference>
<dbReference type="SMR" id="A0JN41"/>
<dbReference type="FunCoup" id="A0JN41">
    <property type="interactions" value="226"/>
</dbReference>
<dbReference type="STRING" id="9913.ENSBTAP00000046047"/>
<dbReference type="PaxDb" id="9913-ENSBTAP00000046047"/>
<dbReference type="Ensembl" id="ENSBTAT00000049111.5">
    <property type="protein sequence ID" value="ENSBTAP00000046047.3"/>
    <property type="gene ID" value="ENSBTAG00000034681.5"/>
</dbReference>
<dbReference type="GeneID" id="535917"/>
<dbReference type="KEGG" id="bta:535917"/>
<dbReference type="CTD" id="56934"/>
<dbReference type="VEuPathDB" id="HostDB:ENSBTAG00000034681"/>
<dbReference type="VGNC" id="VGNC:26648">
    <property type="gene designation" value="CA10"/>
</dbReference>
<dbReference type="eggNOG" id="KOG0382">
    <property type="taxonomic scope" value="Eukaryota"/>
</dbReference>
<dbReference type="GeneTree" id="ENSGT00940000155223"/>
<dbReference type="HOGENOM" id="CLU_039326_7_1_1"/>
<dbReference type="InParanoid" id="A0JN41"/>
<dbReference type="OMA" id="MYYQANT"/>
<dbReference type="OrthoDB" id="5978072at2759"/>
<dbReference type="TreeFam" id="TF352926"/>
<dbReference type="Proteomes" id="UP000009136">
    <property type="component" value="Chromosome 19"/>
</dbReference>
<dbReference type="Bgee" id="ENSBTAG00000034681">
    <property type="expression patterns" value="Expressed in occipital lobe and 60 other cell types or tissues"/>
</dbReference>
<dbReference type="GO" id="GO:0004089">
    <property type="term" value="F:carbonate dehydratase activity"/>
    <property type="evidence" value="ECO:0007669"/>
    <property type="project" value="InterPro"/>
</dbReference>
<dbReference type="GO" id="GO:0016836">
    <property type="term" value="F:hydro-lyase activity"/>
    <property type="evidence" value="ECO:0000318"/>
    <property type="project" value="GO_Central"/>
</dbReference>
<dbReference type="GO" id="GO:0008270">
    <property type="term" value="F:zinc ion binding"/>
    <property type="evidence" value="ECO:0007669"/>
    <property type="project" value="InterPro"/>
</dbReference>
<dbReference type="CDD" id="cd03121">
    <property type="entry name" value="alpha_CARP_X_XI_like"/>
    <property type="match status" value="1"/>
</dbReference>
<dbReference type="FunFam" id="3.10.200.10:FF:000002">
    <property type="entry name" value="Carbonic anhydrase-related protein 10"/>
    <property type="match status" value="1"/>
</dbReference>
<dbReference type="Gene3D" id="3.10.200.10">
    <property type="entry name" value="Alpha carbonic anhydrase"/>
    <property type="match status" value="1"/>
</dbReference>
<dbReference type="InterPro" id="IPR041878">
    <property type="entry name" value="Alpha_CARP_X/XI"/>
</dbReference>
<dbReference type="InterPro" id="IPR001148">
    <property type="entry name" value="CA_dom"/>
</dbReference>
<dbReference type="InterPro" id="IPR036398">
    <property type="entry name" value="CA_dom_sf"/>
</dbReference>
<dbReference type="InterPro" id="IPR023561">
    <property type="entry name" value="Carbonic_anhydrase_a-class"/>
</dbReference>
<dbReference type="PANTHER" id="PTHR18952">
    <property type="entry name" value="CARBONIC ANHYDRASE"/>
    <property type="match status" value="1"/>
</dbReference>
<dbReference type="PANTHER" id="PTHR18952:SF91">
    <property type="entry name" value="CARBONIC ANHYDRASE-RELATED PROTEIN 10"/>
    <property type="match status" value="1"/>
</dbReference>
<dbReference type="Pfam" id="PF00194">
    <property type="entry name" value="Carb_anhydrase"/>
    <property type="match status" value="1"/>
</dbReference>
<dbReference type="SMART" id="SM01057">
    <property type="entry name" value="Carb_anhydrase"/>
    <property type="match status" value="1"/>
</dbReference>
<dbReference type="SUPFAM" id="SSF51069">
    <property type="entry name" value="Carbonic anhydrase"/>
    <property type="match status" value="1"/>
</dbReference>
<dbReference type="PROSITE" id="PS51144">
    <property type="entry name" value="ALPHA_CA_2"/>
    <property type="match status" value="1"/>
</dbReference>
<evidence type="ECO:0000255" key="1">
    <source>
        <dbReference type="PROSITE-ProRule" id="PRU01134"/>
    </source>
</evidence>
<evidence type="ECO:0000305" key="2"/>
<name>CAH10_BOVIN</name>
<sequence>MEIVWEVLFLLQANFIVCISAQQNSPKIHEGWWAYKEVVQGSFVPVPSFWGLVNSAWNLCSVGKRQSPVNIETSHMIFDPFLTPLRINTGGRKVSGTMYNTGRHVSLRLDKEHLVNISGGPMTYSHRLEEIRLHFGSEDSQGSEHLLNGQAFSGEVQLIHYNHELYTNVTEAAKSPNGLVVVSIFIKVSDSSNPFLNRMLNRDTITRITYKNDAYLLQGLNIEELYPETSSFITYDGSMTIPPCYETANWIIMNKPVYITRMQMHSLRLLSQNQPSQIFLSMSDNFRPVQSLNNRCIRTNINFSLQGKDCPNNRAQKLQYRVNEWLLK</sequence>